<protein>
    <recommendedName>
        <fullName evidence="1">Phosphoserine aminotransferase</fullName>
        <ecNumber evidence="1">2.6.1.52</ecNumber>
    </recommendedName>
    <alternativeName>
        <fullName evidence="1">Phosphohydroxythreonine aminotransferase</fullName>
        <shortName evidence="1">PSAT</shortName>
    </alternativeName>
</protein>
<comment type="function">
    <text evidence="1">Catalyzes the reversible conversion of 3-phosphohydroxypyruvate to phosphoserine and of 3-hydroxy-2-oxo-4-phosphonooxybutanoate to phosphohydroxythreonine.</text>
</comment>
<comment type="catalytic activity">
    <reaction evidence="1">
        <text>O-phospho-L-serine + 2-oxoglutarate = 3-phosphooxypyruvate + L-glutamate</text>
        <dbReference type="Rhea" id="RHEA:14329"/>
        <dbReference type="ChEBI" id="CHEBI:16810"/>
        <dbReference type="ChEBI" id="CHEBI:18110"/>
        <dbReference type="ChEBI" id="CHEBI:29985"/>
        <dbReference type="ChEBI" id="CHEBI:57524"/>
        <dbReference type="EC" id="2.6.1.52"/>
    </reaction>
</comment>
<comment type="catalytic activity">
    <reaction evidence="1">
        <text>4-(phosphooxy)-L-threonine + 2-oxoglutarate = (R)-3-hydroxy-2-oxo-4-phosphooxybutanoate + L-glutamate</text>
        <dbReference type="Rhea" id="RHEA:16573"/>
        <dbReference type="ChEBI" id="CHEBI:16810"/>
        <dbReference type="ChEBI" id="CHEBI:29985"/>
        <dbReference type="ChEBI" id="CHEBI:58452"/>
        <dbReference type="ChEBI" id="CHEBI:58538"/>
        <dbReference type="EC" id="2.6.1.52"/>
    </reaction>
</comment>
<comment type="cofactor">
    <cofactor evidence="1">
        <name>pyridoxal 5'-phosphate</name>
        <dbReference type="ChEBI" id="CHEBI:597326"/>
    </cofactor>
    <text evidence="1">Binds 1 pyridoxal phosphate per subunit.</text>
</comment>
<comment type="pathway">
    <text evidence="1">Amino-acid biosynthesis; L-serine biosynthesis; L-serine from 3-phospho-D-glycerate: step 2/3.</text>
</comment>
<comment type="pathway">
    <text evidence="1">Cofactor biosynthesis; pyridoxine 5'-phosphate biosynthesis; pyridoxine 5'-phosphate from D-erythrose 4-phosphate: step 3/5.</text>
</comment>
<comment type="subunit">
    <text evidence="1">Homodimer.</text>
</comment>
<comment type="subcellular location">
    <subcellularLocation>
        <location evidence="1">Cytoplasm</location>
    </subcellularLocation>
</comment>
<comment type="similarity">
    <text evidence="1">Belongs to the class-V pyridoxal-phosphate-dependent aminotransferase family. SerC subfamily.</text>
</comment>
<accession>Q7WGU2</accession>
<proteinExistence type="inferred from homology"/>
<evidence type="ECO:0000255" key="1">
    <source>
        <dbReference type="HAMAP-Rule" id="MF_00160"/>
    </source>
</evidence>
<feature type="chain" id="PRO_0000150155" description="Phosphoserine aminotransferase">
    <location>
        <begin position="1"/>
        <end position="377"/>
    </location>
</feature>
<feature type="binding site" evidence="1">
    <location>
        <position position="43"/>
    </location>
    <ligand>
        <name>L-glutamate</name>
        <dbReference type="ChEBI" id="CHEBI:29985"/>
    </ligand>
</feature>
<feature type="binding site" evidence="1">
    <location>
        <position position="105"/>
    </location>
    <ligand>
        <name>pyridoxal 5'-phosphate</name>
        <dbReference type="ChEBI" id="CHEBI:597326"/>
    </ligand>
</feature>
<feature type="binding site" evidence="1">
    <location>
        <position position="164"/>
    </location>
    <ligand>
        <name>pyridoxal 5'-phosphate</name>
        <dbReference type="ChEBI" id="CHEBI:597326"/>
    </ligand>
</feature>
<feature type="binding site" evidence="1">
    <location>
        <position position="189"/>
    </location>
    <ligand>
        <name>pyridoxal 5'-phosphate</name>
        <dbReference type="ChEBI" id="CHEBI:597326"/>
    </ligand>
</feature>
<feature type="binding site" evidence="1">
    <location>
        <position position="212"/>
    </location>
    <ligand>
        <name>pyridoxal 5'-phosphate</name>
        <dbReference type="ChEBI" id="CHEBI:597326"/>
    </ligand>
</feature>
<feature type="binding site" evidence="1">
    <location>
        <begin position="254"/>
        <end position="255"/>
    </location>
    <ligand>
        <name>pyridoxal 5'-phosphate</name>
        <dbReference type="ChEBI" id="CHEBI:597326"/>
    </ligand>
</feature>
<feature type="modified residue" description="N6-(pyridoxal phosphate)lysine" evidence="1">
    <location>
        <position position="213"/>
    </location>
</feature>
<name>SERC_BORBR</name>
<sequence length="377" mass="40869">MMARPWNFSAGPSALPEAVLQQAAAEMLDWHGSGMSVMEMSHRGKHFVQICDEAEADLRELLGLPADYAVMFMQGGGLGENAIVPMNLMGRRSTPAADFVVTGHWSTRSHKEAGRYGDAQIAASAAEATEIDGQAQSSWTWLPPVDTWRVRKDSAYLHLCSNETIGGVEFTEWPDPASLGAPDVPLVVDVSSHFLSRPLDIARAGLVFAGAQKNAGPAGVTVVIARRDLLGHALPICPSAFDYANVAADHSRYNTPPTFAIYVMGLVFKWIKAHGGVRGMEEANRAKAELLYGYLDGSAFYRNPVQPAVRSRMNVPFVLRDESLNDAFLQGAEAAGLMQLKGHKSVGGMRASIYNAMPLAGVQALIDYLKEFERRHG</sequence>
<reference key="1">
    <citation type="journal article" date="2003" name="Nat. Genet.">
        <title>Comparative analysis of the genome sequences of Bordetella pertussis, Bordetella parapertussis and Bordetella bronchiseptica.</title>
        <authorList>
            <person name="Parkhill J."/>
            <person name="Sebaihia M."/>
            <person name="Preston A."/>
            <person name="Murphy L.D."/>
            <person name="Thomson N.R."/>
            <person name="Harris D.E."/>
            <person name="Holden M.T.G."/>
            <person name="Churcher C.M."/>
            <person name="Bentley S.D."/>
            <person name="Mungall K.L."/>
            <person name="Cerdeno-Tarraga A.-M."/>
            <person name="Temple L."/>
            <person name="James K.D."/>
            <person name="Harris B."/>
            <person name="Quail M.A."/>
            <person name="Achtman M."/>
            <person name="Atkin R."/>
            <person name="Baker S."/>
            <person name="Basham D."/>
            <person name="Bason N."/>
            <person name="Cherevach I."/>
            <person name="Chillingworth T."/>
            <person name="Collins M."/>
            <person name="Cronin A."/>
            <person name="Davis P."/>
            <person name="Doggett J."/>
            <person name="Feltwell T."/>
            <person name="Goble A."/>
            <person name="Hamlin N."/>
            <person name="Hauser H."/>
            <person name="Holroyd S."/>
            <person name="Jagels K."/>
            <person name="Leather S."/>
            <person name="Moule S."/>
            <person name="Norberczak H."/>
            <person name="O'Neil S."/>
            <person name="Ormond D."/>
            <person name="Price C."/>
            <person name="Rabbinowitsch E."/>
            <person name="Rutter S."/>
            <person name="Sanders M."/>
            <person name="Saunders D."/>
            <person name="Seeger K."/>
            <person name="Sharp S."/>
            <person name="Simmonds M."/>
            <person name="Skelton J."/>
            <person name="Squares R."/>
            <person name="Squares S."/>
            <person name="Stevens K."/>
            <person name="Unwin L."/>
            <person name="Whitehead S."/>
            <person name="Barrell B.G."/>
            <person name="Maskell D.J."/>
        </authorList>
    </citation>
    <scope>NUCLEOTIDE SEQUENCE [LARGE SCALE GENOMIC DNA]</scope>
    <source>
        <strain>ATCC BAA-588 / NCTC 13252 / RB50</strain>
    </source>
</reference>
<gene>
    <name evidence="1" type="primary">serC</name>
    <name type="ordered locus">BB3472</name>
</gene>
<keyword id="KW-0028">Amino-acid biosynthesis</keyword>
<keyword id="KW-0032">Aminotransferase</keyword>
<keyword id="KW-0963">Cytoplasm</keyword>
<keyword id="KW-0663">Pyridoxal phosphate</keyword>
<keyword id="KW-0664">Pyridoxine biosynthesis</keyword>
<keyword id="KW-0718">Serine biosynthesis</keyword>
<keyword id="KW-0808">Transferase</keyword>
<organism>
    <name type="scientific">Bordetella bronchiseptica (strain ATCC BAA-588 / NCTC 13252 / RB50)</name>
    <name type="common">Alcaligenes bronchisepticus</name>
    <dbReference type="NCBI Taxonomy" id="257310"/>
    <lineage>
        <taxon>Bacteria</taxon>
        <taxon>Pseudomonadati</taxon>
        <taxon>Pseudomonadota</taxon>
        <taxon>Betaproteobacteria</taxon>
        <taxon>Burkholderiales</taxon>
        <taxon>Alcaligenaceae</taxon>
        <taxon>Bordetella</taxon>
    </lineage>
</organism>
<dbReference type="EC" id="2.6.1.52" evidence="1"/>
<dbReference type="EMBL" id="BX640447">
    <property type="protein sequence ID" value="CAE33964.1"/>
    <property type="molecule type" value="Genomic_DNA"/>
</dbReference>
<dbReference type="RefSeq" id="WP_003813372.1">
    <property type="nucleotide sequence ID" value="NC_002927.3"/>
</dbReference>
<dbReference type="SMR" id="Q7WGU2"/>
<dbReference type="GeneID" id="93204914"/>
<dbReference type="KEGG" id="bbr:BB3472"/>
<dbReference type="eggNOG" id="COG1932">
    <property type="taxonomic scope" value="Bacteria"/>
</dbReference>
<dbReference type="HOGENOM" id="CLU_034866_0_2_4"/>
<dbReference type="UniPathway" id="UPA00135">
    <property type="reaction ID" value="UER00197"/>
</dbReference>
<dbReference type="UniPathway" id="UPA00244">
    <property type="reaction ID" value="UER00311"/>
</dbReference>
<dbReference type="Proteomes" id="UP000001027">
    <property type="component" value="Chromosome"/>
</dbReference>
<dbReference type="GO" id="GO:0005737">
    <property type="term" value="C:cytoplasm"/>
    <property type="evidence" value="ECO:0007669"/>
    <property type="project" value="UniProtKB-SubCell"/>
</dbReference>
<dbReference type="GO" id="GO:0004648">
    <property type="term" value="F:O-phospho-L-serine:2-oxoglutarate aminotransferase activity"/>
    <property type="evidence" value="ECO:0007669"/>
    <property type="project" value="UniProtKB-UniRule"/>
</dbReference>
<dbReference type="GO" id="GO:0030170">
    <property type="term" value="F:pyridoxal phosphate binding"/>
    <property type="evidence" value="ECO:0007669"/>
    <property type="project" value="UniProtKB-UniRule"/>
</dbReference>
<dbReference type="GO" id="GO:0006564">
    <property type="term" value="P:L-serine biosynthetic process"/>
    <property type="evidence" value="ECO:0007669"/>
    <property type="project" value="UniProtKB-UniRule"/>
</dbReference>
<dbReference type="GO" id="GO:0008615">
    <property type="term" value="P:pyridoxine biosynthetic process"/>
    <property type="evidence" value="ECO:0007669"/>
    <property type="project" value="UniProtKB-UniRule"/>
</dbReference>
<dbReference type="FunFam" id="3.40.640.10:FF:000010">
    <property type="entry name" value="Phosphoserine aminotransferase"/>
    <property type="match status" value="1"/>
</dbReference>
<dbReference type="FunFam" id="3.90.1150.10:FF:000006">
    <property type="entry name" value="Phosphoserine aminotransferase"/>
    <property type="match status" value="1"/>
</dbReference>
<dbReference type="Gene3D" id="3.90.1150.10">
    <property type="entry name" value="Aspartate Aminotransferase, domain 1"/>
    <property type="match status" value="1"/>
</dbReference>
<dbReference type="Gene3D" id="3.40.640.10">
    <property type="entry name" value="Type I PLP-dependent aspartate aminotransferase-like (Major domain)"/>
    <property type="match status" value="1"/>
</dbReference>
<dbReference type="HAMAP" id="MF_00160">
    <property type="entry name" value="SerC_aminotrans_5"/>
    <property type="match status" value="1"/>
</dbReference>
<dbReference type="InterPro" id="IPR000192">
    <property type="entry name" value="Aminotrans_V_dom"/>
</dbReference>
<dbReference type="InterPro" id="IPR022278">
    <property type="entry name" value="Pser_aminoTfrase"/>
</dbReference>
<dbReference type="InterPro" id="IPR015424">
    <property type="entry name" value="PyrdxlP-dep_Trfase"/>
</dbReference>
<dbReference type="InterPro" id="IPR015421">
    <property type="entry name" value="PyrdxlP-dep_Trfase_major"/>
</dbReference>
<dbReference type="InterPro" id="IPR015422">
    <property type="entry name" value="PyrdxlP-dep_Trfase_small"/>
</dbReference>
<dbReference type="NCBIfam" id="NF003764">
    <property type="entry name" value="PRK05355.1"/>
    <property type="match status" value="1"/>
</dbReference>
<dbReference type="NCBIfam" id="TIGR01364">
    <property type="entry name" value="serC_1"/>
    <property type="match status" value="1"/>
</dbReference>
<dbReference type="PANTHER" id="PTHR43247">
    <property type="entry name" value="PHOSPHOSERINE AMINOTRANSFERASE"/>
    <property type="match status" value="1"/>
</dbReference>
<dbReference type="PANTHER" id="PTHR43247:SF1">
    <property type="entry name" value="PHOSPHOSERINE AMINOTRANSFERASE"/>
    <property type="match status" value="1"/>
</dbReference>
<dbReference type="Pfam" id="PF00266">
    <property type="entry name" value="Aminotran_5"/>
    <property type="match status" value="1"/>
</dbReference>
<dbReference type="PIRSF" id="PIRSF000525">
    <property type="entry name" value="SerC"/>
    <property type="match status" value="1"/>
</dbReference>
<dbReference type="SUPFAM" id="SSF53383">
    <property type="entry name" value="PLP-dependent transferases"/>
    <property type="match status" value="1"/>
</dbReference>